<feature type="chain" id="PRO_0000437767" description="Tryptamine hydroxycinnamoyltransferase 2">
    <location>
        <begin position="1"/>
        <end position="434"/>
    </location>
</feature>
<feature type="active site" description="Proton acceptor" evidence="1">
    <location>
        <position position="154"/>
    </location>
</feature>
<feature type="active site" description="Proton acceptor" evidence="1">
    <location>
        <position position="380"/>
    </location>
</feature>
<name>THT2_ORYSJ</name>
<organism>
    <name type="scientific">Oryza sativa subsp. japonica</name>
    <name type="common">Rice</name>
    <dbReference type="NCBI Taxonomy" id="39947"/>
    <lineage>
        <taxon>Eukaryota</taxon>
        <taxon>Viridiplantae</taxon>
        <taxon>Streptophyta</taxon>
        <taxon>Embryophyta</taxon>
        <taxon>Tracheophyta</taxon>
        <taxon>Spermatophyta</taxon>
        <taxon>Magnoliopsida</taxon>
        <taxon>Liliopsida</taxon>
        <taxon>Poales</taxon>
        <taxon>Poaceae</taxon>
        <taxon>BOP clade</taxon>
        <taxon>Oryzoideae</taxon>
        <taxon>Oryzeae</taxon>
        <taxon>Oryzinae</taxon>
        <taxon>Oryza</taxon>
        <taxon>Oryza sativa</taxon>
    </lineage>
</organism>
<proteinExistence type="evidence at protein level"/>
<dbReference type="EC" id="2.3.1.-" evidence="4"/>
<dbReference type="EMBL" id="AC114474">
    <property type="protein sequence ID" value="AAM74310.1"/>
    <property type="molecule type" value="Genomic_DNA"/>
</dbReference>
<dbReference type="EMBL" id="DP000086">
    <property type="protein sequence ID" value="AAP53439.1"/>
    <property type="molecule type" value="Genomic_DNA"/>
</dbReference>
<dbReference type="EMBL" id="AP008216">
    <property type="protein sequence ID" value="BAF26399.1"/>
    <property type="status" value="ALT_SEQ"/>
    <property type="molecule type" value="Genomic_DNA"/>
</dbReference>
<dbReference type="EMBL" id="AP014966">
    <property type="protein sequence ID" value="BAT10622.1"/>
    <property type="status" value="ALT_SEQ"/>
    <property type="molecule type" value="Genomic_DNA"/>
</dbReference>
<dbReference type="RefSeq" id="XP_015612968.1">
    <property type="nucleotide sequence ID" value="XM_015757482.1"/>
</dbReference>
<dbReference type="SMR" id="Q8LMI4"/>
<dbReference type="FunCoup" id="Q8LMI4">
    <property type="interactions" value="1"/>
</dbReference>
<dbReference type="STRING" id="39947.Q8LMI4"/>
<dbReference type="PaxDb" id="39947-Q8LMI4"/>
<dbReference type="EnsemblPlants" id="Os10t0380100-01">
    <property type="protein sequence ID" value="Os10t0380100-01"/>
    <property type="gene ID" value="Os10g0380100"/>
</dbReference>
<dbReference type="Gramene" id="Os10t0380100-01">
    <property type="protein sequence ID" value="Os10t0380100-01"/>
    <property type="gene ID" value="Os10g0380100"/>
</dbReference>
<dbReference type="KEGG" id="dosa:Os10g0380100"/>
<dbReference type="eggNOG" id="ENOG502QVP8">
    <property type="taxonomic scope" value="Eukaryota"/>
</dbReference>
<dbReference type="InParanoid" id="Q8LMI4"/>
<dbReference type="OrthoDB" id="671439at2759"/>
<dbReference type="SABIO-RK" id="Q8LMI4"/>
<dbReference type="Proteomes" id="UP000000763">
    <property type="component" value="Chromosome 10"/>
</dbReference>
<dbReference type="Proteomes" id="UP000059680">
    <property type="component" value="Chromosome 10"/>
</dbReference>
<dbReference type="GO" id="GO:0016747">
    <property type="term" value="F:acyltransferase activity, transferring groups other than amino-acyl groups"/>
    <property type="evidence" value="ECO:0000318"/>
    <property type="project" value="GO_Central"/>
</dbReference>
<dbReference type="GO" id="GO:0050734">
    <property type="term" value="F:hydroxycinnamoyltransferase activity"/>
    <property type="evidence" value="ECO:0000314"/>
    <property type="project" value="UniProtKB"/>
</dbReference>
<dbReference type="FunFam" id="3.30.559.10:FF:000008">
    <property type="entry name" value="Tryptamine hydroxycinnamoyl transferase"/>
    <property type="match status" value="1"/>
</dbReference>
<dbReference type="FunFam" id="3.30.559.10:FF:000014">
    <property type="entry name" value="Tryptamine hydroxycinnamoyl transferase"/>
    <property type="match status" value="1"/>
</dbReference>
<dbReference type="Gene3D" id="3.30.559.10">
    <property type="entry name" value="Chloramphenicol acetyltransferase-like domain"/>
    <property type="match status" value="2"/>
</dbReference>
<dbReference type="InterPro" id="IPR023213">
    <property type="entry name" value="CAT-like_dom_sf"/>
</dbReference>
<dbReference type="InterPro" id="IPR050317">
    <property type="entry name" value="Plant_Fungal_Acyltransferase"/>
</dbReference>
<dbReference type="PANTHER" id="PTHR31642">
    <property type="entry name" value="TRICHOTHECENE 3-O-ACETYLTRANSFERASE"/>
    <property type="match status" value="1"/>
</dbReference>
<dbReference type="PANTHER" id="PTHR31642:SF278">
    <property type="entry name" value="TRYPTAMINE HYDROXYCINNAMOYLTRANSFERASE 1"/>
    <property type="match status" value="1"/>
</dbReference>
<dbReference type="Pfam" id="PF02458">
    <property type="entry name" value="Transferase"/>
    <property type="match status" value="1"/>
</dbReference>
<dbReference type="SUPFAM" id="SSF52777">
    <property type="entry name" value="CoA-dependent acyltransferases"/>
    <property type="match status" value="1"/>
</dbReference>
<gene>
    <name evidence="3" type="primary">THT2</name>
    <name evidence="7" type="ordered locus">Os10g0380100</name>
    <name evidence="6" type="ordered locus">LOC_Os10g23820</name>
    <name evidence="5" type="ORF">OSJNBa0032N04.1</name>
</gene>
<protein>
    <recommendedName>
        <fullName evidence="4">Tryptamine hydroxycinnamoyltransferase 2</fullName>
        <shortName evidence="3">OsTHT2</shortName>
        <ecNumber evidence="4">2.3.1.-</ecNumber>
    </recommendedName>
</protein>
<keyword id="KW-0012">Acyltransferase</keyword>
<keyword id="KW-1185">Reference proteome</keyword>
<keyword id="KW-0808">Transferase</keyword>
<evidence type="ECO:0000250" key="1">
    <source>
        <dbReference type="UniProtKB" id="Q8W1W9"/>
    </source>
</evidence>
<evidence type="ECO:0000269" key="2">
    <source>
    </source>
</evidence>
<evidence type="ECO:0000303" key="3">
    <source>
    </source>
</evidence>
<evidence type="ECO:0000305" key="4"/>
<evidence type="ECO:0000312" key="5">
    <source>
        <dbReference type="EMBL" id="AAM74310.1"/>
    </source>
</evidence>
<evidence type="ECO:0000312" key="6">
    <source>
        <dbReference type="EMBL" id="AAP53439.1"/>
    </source>
</evidence>
<evidence type="ECO:0000312" key="7">
    <source>
        <dbReference type="EMBL" id="BAT10622.1"/>
    </source>
</evidence>
<reference key="1">
    <citation type="journal article" date="2003" name="Science">
        <title>In-depth view of structure, activity, and evolution of rice chromosome 10.</title>
        <authorList>
            <person name="Yu Y."/>
            <person name="Rambo T."/>
            <person name="Currie J."/>
            <person name="Saski C."/>
            <person name="Kim H.-R."/>
            <person name="Collura K."/>
            <person name="Thompson S."/>
            <person name="Simmons J."/>
            <person name="Yang T.-J."/>
            <person name="Nah G."/>
            <person name="Patel A.J."/>
            <person name="Thurmond S."/>
            <person name="Henry D."/>
            <person name="Oates R."/>
            <person name="Palmer M."/>
            <person name="Pries G."/>
            <person name="Gibson J."/>
            <person name="Anderson H."/>
            <person name="Paradkar M."/>
            <person name="Crane L."/>
            <person name="Dale J."/>
            <person name="Carver M.B."/>
            <person name="Wood T."/>
            <person name="Frisch D."/>
            <person name="Engler F."/>
            <person name="Soderlund C."/>
            <person name="Palmer L.E."/>
            <person name="Teytelman L."/>
            <person name="Nascimento L."/>
            <person name="De la Bastide M."/>
            <person name="Spiegel L."/>
            <person name="Ware D."/>
            <person name="O'Shaughnessy A."/>
            <person name="Dike S."/>
            <person name="Dedhia N."/>
            <person name="Preston R."/>
            <person name="Huang E."/>
            <person name="Ferraro K."/>
            <person name="Kuit K."/>
            <person name="Miller B."/>
            <person name="Zutavern T."/>
            <person name="Katzenberger F."/>
            <person name="Muller S."/>
            <person name="Balija V."/>
            <person name="Martienssen R.A."/>
            <person name="Stein L."/>
            <person name="Minx P."/>
            <person name="Johnson D."/>
            <person name="Cordum H."/>
            <person name="Mardis E."/>
            <person name="Cheng Z."/>
            <person name="Jiang J."/>
            <person name="Wilson R."/>
            <person name="McCombie W.R."/>
            <person name="Wing R.A."/>
            <person name="Yuan Q."/>
            <person name="Ouyang S."/>
            <person name="Liu J."/>
            <person name="Jones K.M."/>
            <person name="Gansberger K."/>
            <person name="Moffat K."/>
            <person name="Hill J."/>
            <person name="Tsitrin T."/>
            <person name="Overton L."/>
            <person name="Bera J."/>
            <person name="Kim M."/>
            <person name="Jin S."/>
            <person name="Tallon L."/>
            <person name="Ciecko A."/>
            <person name="Pai G."/>
            <person name="Van Aken S."/>
            <person name="Utterback T."/>
            <person name="Reidmuller S."/>
            <person name="Bormann J."/>
            <person name="Feldblyum T."/>
            <person name="Hsiao J."/>
            <person name="Zismann V."/>
            <person name="Blunt S."/>
            <person name="de Vazeille A.R."/>
            <person name="Shaffer T."/>
            <person name="Koo H."/>
            <person name="Suh B."/>
            <person name="Yang Q."/>
            <person name="Haas B."/>
            <person name="Peterson J."/>
            <person name="Pertea M."/>
            <person name="Volfovsky N."/>
            <person name="Wortman J."/>
            <person name="White O."/>
            <person name="Salzberg S.L."/>
            <person name="Fraser C.M."/>
            <person name="Buell C.R."/>
            <person name="Messing J."/>
            <person name="Song R."/>
            <person name="Fuks G."/>
            <person name="Llaca V."/>
            <person name="Kovchak S."/>
            <person name="Young S."/>
            <person name="Bowers J.E."/>
            <person name="Paterson A.H."/>
            <person name="Johns M.A."/>
            <person name="Mao L."/>
            <person name="Pan H."/>
            <person name="Dean R.A."/>
        </authorList>
    </citation>
    <scope>NUCLEOTIDE SEQUENCE [LARGE SCALE GENOMIC DNA]</scope>
    <source>
        <strain>cv. Nipponbare</strain>
    </source>
</reference>
<reference key="2">
    <citation type="journal article" date="2005" name="Nature">
        <title>The map-based sequence of the rice genome.</title>
        <authorList>
            <consortium name="International rice genome sequencing project (IRGSP)"/>
        </authorList>
    </citation>
    <scope>NUCLEOTIDE SEQUENCE [LARGE SCALE GENOMIC DNA]</scope>
    <source>
        <strain>cv. Nipponbare</strain>
    </source>
</reference>
<reference key="3">
    <citation type="journal article" date="2008" name="Nucleic Acids Res.">
        <title>The rice annotation project database (RAP-DB): 2008 update.</title>
        <authorList>
            <consortium name="The rice annotation project (RAP)"/>
        </authorList>
    </citation>
    <scope>GENOME REANNOTATION</scope>
    <source>
        <strain>cv. Nipponbare</strain>
    </source>
</reference>
<reference key="4">
    <citation type="journal article" date="2013" name="Rice">
        <title>Improvement of the Oryza sativa Nipponbare reference genome using next generation sequence and optical map data.</title>
        <authorList>
            <person name="Kawahara Y."/>
            <person name="de la Bastide M."/>
            <person name="Hamilton J.P."/>
            <person name="Kanamori H."/>
            <person name="McCombie W.R."/>
            <person name="Ouyang S."/>
            <person name="Schwartz D.C."/>
            <person name="Tanaka T."/>
            <person name="Wu J."/>
            <person name="Zhou S."/>
            <person name="Childs K.L."/>
            <person name="Davidson R.M."/>
            <person name="Lin H."/>
            <person name="Quesada-Ocampo L."/>
            <person name="Vaillancourt B."/>
            <person name="Sakai H."/>
            <person name="Lee S.S."/>
            <person name="Kim J."/>
            <person name="Numa H."/>
            <person name="Itoh T."/>
            <person name="Buell C.R."/>
            <person name="Matsumoto T."/>
        </authorList>
    </citation>
    <scope>GENOME REANNOTATION</scope>
    <source>
        <strain>cv. Nipponbare</strain>
    </source>
</reference>
<reference key="5">
    <citation type="journal article" date="2016" name="Plant Cell">
        <title>Evolutionarily distinct BAHD N-acyltransferases are responsible for natural variation of aromatic amine conjugates in rice.</title>
        <authorList>
            <person name="Peng M."/>
            <person name="Gao Y."/>
            <person name="Chen W."/>
            <person name="Wang W."/>
            <person name="Shen S."/>
            <person name="Shi J."/>
            <person name="Wang C."/>
            <person name="Zhang Y."/>
            <person name="Zou L."/>
            <person name="Wang S."/>
            <person name="Wan J."/>
            <person name="Liu X."/>
            <person name="Gong L."/>
            <person name="Luo J."/>
        </authorList>
    </citation>
    <scope>FUNCTION</scope>
    <scope>BIOPHYSICOCHEMICAL PROPERTIES</scope>
</reference>
<comment type="function">
    <text evidence="2">Hydroxycinnamoyl transferase that catalyzes the transfer of an acyl from p-coumaryol-CoA to tryptamine, to produce coumaroyl tryptamine. Serotonin and tyramine serve as acyl acceptors in vitro. Can use caffeoyl-CoA, and to a lesser extent feruloyl-CoA, as acyl donors.</text>
</comment>
<comment type="biophysicochemical properties">
    <kinetics>
        <KM evidence="2">113.1 uM for p-coumaroyl-CoA</KM>
        <KM evidence="2">706.3 uM for caffeoyl-CoA</KM>
        <KM evidence="2">1837 uM for feruloyl-CoA</KM>
        <KM evidence="2">200.9 uM for tryptamine</KM>
        <KM evidence="2">130.7 uM for serotonin</KM>
        <KM evidence="2">199.3 uM for tyramine</KM>
    </kinetics>
</comment>
<comment type="similarity">
    <text evidence="4">Belongs to the plant acyltransferase family.</text>
</comment>
<comment type="sequence caution" evidence="4">
    <conflict type="erroneous gene model prediction">
        <sequence resource="EMBL-CDS" id="BAF26399"/>
    </conflict>
</comment>
<comment type="sequence caution" evidence="4">
    <conflict type="erroneous gene model prediction">
        <sequence resource="EMBL-CDS" id="BAT10622"/>
    </conflict>
</comment>
<sequence>MAVAVEITRSEVLRPSETLAAGGGGKRSQLTVFDRAAMDWYIPAVFAWDGAAAPSNDEVKGGLAAVLARYPHLAGRFDVDERGRRCFNLNNAGVRVLEATVAADLADALAHDVAAHVNELYPKADMENADEPVFQVQLTRYACGGLVIGTACNHQVSDGQSMSFFYVAWAAAVRSAGATLPTPFVDRAAIAVPRGPPAPAFDHRNIEFKGEHSWTHSYGSLPLERIRNLAVHFPDEFVAGLKSHVGARCSTFQCLLAHAWKKITAARDLSPEEYTQVRVAVNCRGRASPAVPMDYFGNMVLWAFPRMRVRDLLSSSYAAVVGVIRNAVARVDEQYIQSFVDFGEVAAGDELTPTAAPPGTVFCPDLEVDSWLGFRFHDLDFGRGPPCAFLPPDVPVEGLLIFVPSCAAKGGVEMFMALDDVHVEAFRQICYSMD</sequence>
<accession>Q8LMI4</accession>
<accession>Q0IY16</accession>